<accession>F9VPG1</accession>
<dbReference type="EC" id="4.1.2.55" evidence="2"/>
<dbReference type="EMBL" id="BA000023">
    <property type="protein sequence ID" value="BAK54808.1"/>
    <property type="molecule type" value="Genomic_DNA"/>
</dbReference>
<dbReference type="RefSeq" id="WP_052846807.1">
    <property type="nucleotide sequence ID" value="NC_003106.2"/>
</dbReference>
<dbReference type="SMR" id="F9VPG1"/>
<dbReference type="STRING" id="273063.STK_24790"/>
<dbReference type="GeneID" id="1460562"/>
<dbReference type="KEGG" id="sto:STK_24790"/>
<dbReference type="PATRIC" id="fig|273063.9.peg.2800"/>
<dbReference type="eggNOG" id="arCOG04172">
    <property type="taxonomic scope" value="Archaea"/>
</dbReference>
<dbReference type="OrthoDB" id="350860at2157"/>
<dbReference type="BRENDA" id="4.1.2.55">
    <property type="organism ID" value="15396"/>
</dbReference>
<dbReference type="UniPathway" id="UPA00856">
    <property type="reaction ID" value="UER00829"/>
</dbReference>
<dbReference type="Proteomes" id="UP000001015">
    <property type="component" value="Chromosome"/>
</dbReference>
<dbReference type="GO" id="GO:0008674">
    <property type="term" value="F:2-dehydro-3-deoxy-6-phosphogalactonate aldolase activity"/>
    <property type="evidence" value="ECO:0000314"/>
    <property type="project" value="UniProtKB"/>
</dbReference>
<dbReference type="GO" id="GO:0008675">
    <property type="term" value="F:2-dehydro-3-deoxy-phosphogluconate aldolase activity"/>
    <property type="evidence" value="ECO:0000314"/>
    <property type="project" value="UniProtKB"/>
</dbReference>
<dbReference type="GO" id="GO:0008840">
    <property type="term" value="F:4-hydroxy-tetrahydrodipicolinate synthase activity"/>
    <property type="evidence" value="ECO:0007669"/>
    <property type="project" value="TreeGrafter"/>
</dbReference>
<dbReference type="FunFam" id="3.20.20.70:FF:000289">
    <property type="entry name" value="2-dehydro-3-deoxy-phosphogluconate/2-dehydro-3-deoxy-6-phosphogalactonate aldolase"/>
    <property type="match status" value="1"/>
</dbReference>
<dbReference type="Gene3D" id="3.20.20.70">
    <property type="entry name" value="Aldolase class I"/>
    <property type="match status" value="1"/>
</dbReference>
<dbReference type="InterPro" id="IPR013785">
    <property type="entry name" value="Aldolase_TIM"/>
</dbReference>
<dbReference type="InterPro" id="IPR002220">
    <property type="entry name" value="DapA-like"/>
</dbReference>
<dbReference type="InterPro" id="IPR053415">
    <property type="entry name" value="ED_pathway_aldolase"/>
</dbReference>
<dbReference type="NCBIfam" id="NF040954">
    <property type="entry name" value="Arch_KDGaldase"/>
    <property type="match status" value="1"/>
</dbReference>
<dbReference type="PANTHER" id="PTHR12128:SF66">
    <property type="entry name" value="4-HYDROXY-2-OXOGLUTARATE ALDOLASE, MITOCHONDRIAL"/>
    <property type="match status" value="1"/>
</dbReference>
<dbReference type="PANTHER" id="PTHR12128">
    <property type="entry name" value="DIHYDRODIPICOLINATE SYNTHASE"/>
    <property type="match status" value="1"/>
</dbReference>
<dbReference type="Pfam" id="PF00701">
    <property type="entry name" value="DHDPS"/>
    <property type="match status" value="1"/>
</dbReference>
<dbReference type="PIRSF" id="PIRSF001365">
    <property type="entry name" value="DHDPS"/>
    <property type="match status" value="1"/>
</dbReference>
<dbReference type="PRINTS" id="PR00146">
    <property type="entry name" value="DHPICSNTHASE"/>
</dbReference>
<dbReference type="SMART" id="SM01130">
    <property type="entry name" value="DHDPS"/>
    <property type="match status" value="1"/>
</dbReference>
<dbReference type="SUPFAM" id="SSF51569">
    <property type="entry name" value="Aldolase"/>
    <property type="match status" value="1"/>
</dbReference>
<comment type="function">
    <text evidence="2">Involved in the degradation of glucose and galactose via the Entner-Doudoroff pathway. Catalyzes the reversible cleavage of 2-keto-3-deoxy-6-phosphogluconate (KDPG) and 2-keto-3-deoxygluconate (KDG) forming pyruvate and glyceraldehyde 3-phosphate or glyceraldehyde, respectively. It is also able to catalyze the reversible cleavage of 2-keto-3-deoxy-6-phosphogalactonate (KDPGal) and 2-keto-3-deoxygalactonate (KDGal).</text>
</comment>
<comment type="catalytic activity">
    <reaction evidence="2">
        <text>2-dehydro-3-deoxy-6-phospho-D-gluconate = D-glyceraldehyde 3-phosphate + pyruvate</text>
        <dbReference type="Rhea" id="RHEA:17089"/>
        <dbReference type="ChEBI" id="CHEBI:15361"/>
        <dbReference type="ChEBI" id="CHEBI:57569"/>
        <dbReference type="ChEBI" id="CHEBI:59776"/>
        <dbReference type="EC" id="4.1.2.55"/>
    </reaction>
</comment>
<comment type="catalytic activity">
    <reaction evidence="2">
        <text>2-dehydro-3-deoxy-6-phospho-D-galactonate = D-glyceraldehyde 3-phosphate + pyruvate</text>
        <dbReference type="Rhea" id="RHEA:24464"/>
        <dbReference type="ChEBI" id="CHEBI:15361"/>
        <dbReference type="ChEBI" id="CHEBI:58298"/>
        <dbReference type="ChEBI" id="CHEBI:59776"/>
        <dbReference type="EC" id="4.1.2.55"/>
    </reaction>
</comment>
<comment type="biophysicochemical properties">
    <kinetics>
        <KM evidence="2">0.7 mM for pyruvate (at pH 6 and at 70 degrees Celsius)</KM>
        <KM evidence="2">3.9 mM for D-glyceraldehyde (at pH 6 and at 70 degrees Celsius)</KM>
        <Vmax evidence="2">17.8 umol/min/mg enzyme with pyruvate as substrate (at pH 6 and at 70 degrees Celsius)</Vmax>
        <Vmax evidence="2">20.3 umol/min/mg enzyme with D-glyceraldehyde as substrate (at pH 6 and at 70 degrees Celsius)</Vmax>
    </kinetics>
    <phDependence>
        <text evidence="2">Optimum pH is 5.5.</text>
    </phDependence>
    <temperatureDependence>
        <text evidence="2">Optimum temperature is around 90 degrees Celsius. Extremely thermostable.</text>
    </temperatureDependence>
</comment>
<comment type="pathway">
    <text>Carbohydrate acid metabolism; 2-dehydro-3-deoxy-D-gluconate degradation; D-glyceraldehyde 3-phosphate and pyruvate from 2-dehydro-3-deoxy-D-gluconate: step 2/2.</text>
</comment>
<comment type="subunit">
    <text evidence="1">Homotetramer; dimer of dimers.</text>
</comment>
<comment type="similarity">
    <text evidence="3">Belongs to the DapA family. KDPG aldolase subfamily.</text>
</comment>
<reference key="1">
    <citation type="journal article" date="2001" name="DNA Res.">
        <title>Complete genome sequence of an aerobic thermoacidophilic Crenarchaeon, Sulfolobus tokodaii strain7.</title>
        <authorList>
            <person name="Kawarabayasi Y."/>
            <person name="Hino Y."/>
            <person name="Horikawa H."/>
            <person name="Jin-no K."/>
            <person name="Takahashi M."/>
            <person name="Sekine M."/>
            <person name="Baba S."/>
            <person name="Ankai A."/>
            <person name="Kosugi H."/>
            <person name="Hosoyama A."/>
            <person name="Fukui S."/>
            <person name="Nagai Y."/>
            <person name="Nishijima K."/>
            <person name="Otsuka R."/>
            <person name="Nakazawa H."/>
            <person name="Takamiya M."/>
            <person name="Kato Y."/>
            <person name="Yoshizawa T."/>
            <person name="Tanaka T."/>
            <person name="Kudoh Y."/>
            <person name="Yamazaki J."/>
            <person name="Kushida N."/>
            <person name="Oguchi A."/>
            <person name="Aoki K."/>
            <person name="Masuda S."/>
            <person name="Yanagii M."/>
            <person name="Nishimura M."/>
            <person name="Yamagishi A."/>
            <person name="Oshima T."/>
            <person name="Kikuchi H."/>
        </authorList>
    </citation>
    <scope>NUCLEOTIDE SEQUENCE [LARGE SCALE GENOMIC DNA]</scope>
    <source>
        <strain>DSM 16993 / JCM 10545 / NBRC 100140 / 7</strain>
    </source>
</reference>
<reference key="2">
    <citation type="journal article" date="2007" name="Biochem. J.">
        <title>Biochemical and structural exploration of the catalytic capacity of Sulfolobus KDG aldolases.</title>
        <authorList>
            <person name="Wolterink-van Loo S."/>
            <person name="van Eerde A."/>
            <person name="Siemerink M.A."/>
            <person name="Akerboom J."/>
            <person name="Dijkstra B.W."/>
            <person name="van der Oost J."/>
        </authorList>
    </citation>
    <scope>FUNCTION</scope>
    <scope>CATALYTIC ACTIVITY</scope>
    <scope>BIOPHYSICOCHEMICAL PROPERTIES</scope>
    <scope>SUBSTRATE SPECIFICITY</scope>
    <source>
        <strain>DSM 16993 / JCM 10545 / NBRC 100140 / 7</strain>
    </source>
</reference>
<keyword id="KW-0119">Carbohydrate metabolism</keyword>
<keyword id="KW-0456">Lyase</keyword>
<keyword id="KW-1185">Reference proteome</keyword>
<keyword id="KW-0704">Schiff base</keyword>
<feature type="chain" id="PRO_0000422657" description="2-dehydro-3-deoxy-phosphogluconate/2-dehydro-3-deoxy-6-phosphogalactonate aldolase">
    <location>
        <begin position="1"/>
        <end position="290"/>
    </location>
</feature>
<feature type="active site" description="Schiff-base intermediate with substrate" evidence="1">
    <location>
        <position position="155"/>
    </location>
</feature>
<feature type="binding site" evidence="1">
    <location>
        <begin position="42"/>
        <end position="43"/>
    </location>
    <ligand>
        <name>substrate</name>
    </ligand>
</feature>
<feature type="binding site" evidence="1">
    <location>
        <begin position="129"/>
        <end position="131"/>
    </location>
    <ligand>
        <name>substrate</name>
    </ligand>
</feature>
<feature type="binding site" evidence="1">
    <location>
        <begin position="155"/>
        <end position="157"/>
    </location>
    <ligand>
        <name>substrate</name>
    </ligand>
</feature>
<feature type="site" description="Proton shuttle" evidence="1">
    <location>
        <position position="129"/>
    </location>
</feature>
<organism>
    <name type="scientific">Sulfurisphaera tokodaii (strain DSM 16993 / JCM 10545 / NBRC 100140 / 7)</name>
    <name type="common">Sulfolobus tokodaii</name>
    <dbReference type="NCBI Taxonomy" id="273063"/>
    <lineage>
        <taxon>Archaea</taxon>
        <taxon>Thermoproteota</taxon>
        <taxon>Thermoprotei</taxon>
        <taxon>Sulfolobales</taxon>
        <taxon>Sulfolobaceae</taxon>
        <taxon>Sulfurisphaera</taxon>
    </lineage>
</organism>
<sequence length="290" mass="32598">MDIVTPILTPFTKEGKIDVEKLKAHAKFLIDNGIDLLFVNGTTGLGPALSKEEKLTTLKTIYDVTNKVIFQVGSLNINDVIDLVKASKDFDIVGIASYPPFYFPRLPEKFLLKYFTTIANYSPHSLYIYNYPLATGYDISAKIVYQMKDLITGLKDTNQDLSHSLEYKILMPNLKVYNGSDSLVFYSLTSLDGSVTAASNYLPHVMKKMKEHITSGQVSKAIELQKLINKALDISRKYGQLSAIYYLVKEFLGYDVGYPRGPIFPLEEDEVKALLSEIQPVKKEIERAVS</sequence>
<protein>
    <recommendedName>
        <fullName>2-dehydro-3-deoxy-phosphogluconate/2-dehydro-3-deoxy-6-phosphogalactonate aldolase</fullName>
        <ecNumber evidence="2">4.1.2.55</ecNumber>
    </recommendedName>
</protein>
<proteinExistence type="evidence at protein level"/>
<evidence type="ECO:0000250" key="1"/>
<evidence type="ECO:0000269" key="2">
    <source>
    </source>
</evidence>
<evidence type="ECO:0000305" key="3"/>
<gene>
    <name type="primary">kdgA</name>
    <name type="ordered locus">STK_24790</name>
</gene>
<name>KDGA_SULTO</name>